<protein>
    <recommendedName>
        <fullName>ADP,ATP carrier protein 1</fullName>
    </recommendedName>
    <alternativeName>
        <fullName>ADP/ATP translocase 1</fullName>
    </alternativeName>
    <alternativeName>
        <fullName>Adenine nucleotide translocator 1</fullName>
        <shortName>ANT 1</shortName>
    </alternativeName>
</protein>
<evidence type="ECO:0000250" key="1">
    <source>
        <dbReference type="UniProtKB" id="G2QNH0"/>
    </source>
</evidence>
<evidence type="ECO:0000250" key="2">
    <source>
        <dbReference type="UniProtKB" id="P02722"/>
    </source>
</evidence>
<evidence type="ECO:0000250" key="3">
    <source>
        <dbReference type="UniProtKB" id="P12235"/>
    </source>
</evidence>
<evidence type="ECO:0000250" key="4">
    <source>
        <dbReference type="UniProtKB" id="P18239"/>
    </source>
</evidence>
<evidence type="ECO:0000255" key="5"/>
<evidence type="ECO:0000269" key="6">
    <source>
    </source>
</evidence>
<evidence type="ECO:0000305" key="7"/>
<sequence length="309" mass="34121">MSHTETQTQQSHFGVDFLMGGVSAAIAKTGAAPIERVKLLMQNQEEMLKQGSLDTRYKGILDCFKRTATHEGIVSFWRGNTANVLRYFPTQALNFAFKDKIKSLLSYDRERDGYAKWFAGNLFSGGAAGGLSLLFVYSLDYARTRLAADARGSKSTSQRQFNGLLDVYKKTLKTDGLLGLYRGFVPSVLGIIVYRGLYFGLYDSFKPVLLTGALEGSFVASFLLGWVITMGASTASYPLDTVRRRMMMTSGQTIKYDGALDCLRKIVQKEGAYSLFKGCGANIFRGVAAAGVISLYDQLQLIMFGKKFK</sequence>
<reference key="1">
    <citation type="journal article" date="1986" name="Mol. Cell. Biol.">
        <title>Sequences required for delivery and localization of the ADP/ATP translocator to the mitochondrial inner membrane.</title>
        <authorList>
            <person name="Adrian G.S."/>
            <person name="McCammon M.T."/>
            <person name="Montgomery D.L."/>
            <person name="Douglas M.G."/>
        </authorList>
    </citation>
    <scope>NUCLEOTIDE SEQUENCE [GENOMIC DNA]</scope>
</reference>
<reference key="2">
    <citation type="journal article" date="1997" name="Nature">
        <title>The nucleotide sequence of Saccharomyces cerevisiae chromosome XIII.</title>
        <authorList>
            <person name="Bowman S."/>
            <person name="Churcher C.M."/>
            <person name="Badcock K."/>
            <person name="Brown D."/>
            <person name="Chillingworth T."/>
            <person name="Connor R."/>
            <person name="Dedman K."/>
            <person name="Devlin K."/>
            <person name="Gentles S."/>
            <person name="Hamlin N."/>
            <person name="Hunt S."/>
            <person name="Jagels K."/>
            <person name="Lye G."/>
            <person name="Moule S."/>
            <person name="Odell C."/>
            <person name="Pearson D."/>
            <person name="Rajandream M.A."/>
            <person name="Rice P."/>
            <person name="Skelton J."/>
            <person name="Walsh S.V."/>
            <person name="Whitehead S."/>
            <person name="Barrell B.G."/>
        </authorList>
    </citation>
    <scope>NUCLEOTIDE SEQUENCE [LARGE SCALE GENOMIC DNA]</scope>
    <source>
        <strain>ATCC 204508 / S288c</strain>
    </source>
</reference>
<reference key="3">
    <citation type="journal article" date="2014" name="G3 (Bethesda)">
        <title>The reference genome sequence of Saccharomyces cerevisiae: Then and now.</title>
        <authorList>
            <person name="Engel S.R."/>
            <person name="Dietrich F.S."/>
            <person name="Fisk D.G."/>
            <person name="Binkley G."/>
            <person name="Balakrishnan R."/>
            <person name="Costanzo M.C."/>
            <person name="Dwight S.S."/>
            <person name="Hitz B.C."/>
            <person name="Karra K."/>
            <person name="Nash R.S."/>
            <person name="Weng S."/>
            <person name="Wong E.D."/>
            <person name="Lloyd P."/>
            <person name="Skrzypek M.S."/>
            <person name="Miyasato S.R."/>
            <person name="Simison M."/>
            <person name="Cherry J.M."/>
        </authorList>
    </citation>
    <scope>GENOME REANNOTATION</scope>
    <source>
        <strain>ATCC 204508 / S288c</strain>
    </source>
</reference>
<reference key="4">
    <citation type="journal article" date="1991" name="Cell">
        <title>S. cerevisiae genes required for cell cycle arrest in response to loss of microtubule function.</title>
        <authorList>
            <person name="Hoyt M.A."/>
            <person name="Totis L."/>
            <person name="Roberts B.T."/>
        </authorList>
    </citation>
    <scope>NUCLEOTIDE SEQUENCE [GENOMIC DNA] OF 265-309</scope>
    <source>
        <strain>ATCC 204508 / S288c</strain>
    </source>
</reference>
<reference key="5">
    <citation type="journal article" date="1990" name="J. Biol. Chem.">
        <title>Structure-function studies of adenine nucleotide transport in mitochondria. II. Biochemical analysis of distinct AAC1 and AAC2 proteins in yeast.</title>
        <authorList>
            <person name="Gawaz M."/>
            <person name="Douglas M.G."/>
            <person name="Klingenberg M."/>
        </authorList>
    </citation>
    <scope>FUNCTION</scope>
    <scope>CATALYTIC ACTIVITY</scope>
</reference>
<reference key="6">
    <citation type="journal article" date="2007" name="Mol. Cell. Proteomics">
        <title>Profiling phosphoproteins of yeast mitochondria reveals a role of phosphorylation in assembly of the ATP synthase.</title>
        <authorList>
            <person name="Reinders J."/>
            <person name="Wagner K."/>
            <person name="Zahedi R.P."/>
            <person name="Stojanovski D."/>
            <person name="Eyrich B."/>
            <person name="van der Laan M."/>
            <person name="Rehling P."/>
            <person name="Sickmann A."/>
            <person name="Pfanner N."/>
            <person name="Meisinger C."/>
        </authorList>
    </citation>
    <scope>IDENTIFICATION BY MASS SPECTROMETRY [LARGE SCALE ANALYSIS]</scope>
    <source>
        <strain>ATCC 76625 / YPH499</strain>
    </source>
</reference>
<accession>P04710</accession>
<accession>D6VZN1</accession>
<name>ADT1_YEAST</name>
<proteinExistence type="evidence at protein level"/>
<gene>
    <name type="primary">AAC1</name>
    <name type="ordered locus">YMR056C</name>
    <name type="ORF">YM9796.09C</name>
</gene>
<organism>
    <name type="scientific">Saccharomyces cerevisiae (strain ATCC 204508 / S288c)</name>
    <name type="common">Baker's yeast</name>
    <dbReference type="NCBI Taxonomy" id="559292"/>
    <lineage>
        <taxon>Eukaryota</taxon>
        <taxon>Fungi</taxon>
        <taxon>Dikarya</taxon>
        <taxon>Ascomycota</taxon>
        <taxon>Saccharomycotina</taxon>
        <taxon>Saccharomycetes</taxon>
        <taxon>Saccharomycetales</taxon>
        <taxon>Saccharomycetaceae</taxon>
        <taxon>Saccharomyces</taxon>
    </lineage>
</organism>
<comment type="function">
    <text evidence="1 6">ADP:ATP antiporter that mediates import of ADP into the mitochondrial matrix for ATP synthesis, and export of ATP out to fuel the cell (PubMed:2167309). Cycles between the cytoplasmic-open state (c-state) and the matrix-open state (m-state): operates by the alternating access mechanism with a single substrate-binding site intermittently exposed to either the cytosolic (c-state) or matrix (m-state) side of the inner mitochondrial membrane (By similarity).</text>
</comment>
<comment type="catalytic activity">
    <reaction evidence="6">
        <text>ADP(in) + ATP(out) = ADP(out) + ATP(in)</text>
        <dbReference type="Rhea" id="RHEA:34999"/>
        <dbReference type="ChEBI" id="CHEBI:30616"/>
        <dbReference type="ChEBI" id="CHEBI:456216"/>
    </reaction>
    <physiologicalReaction direction="left-to-right" evidence="6">
        <dbReference type="Rhea" id="RHEA:35000"/>
    </physiologicalReaction>
</comment>
<comment type="activity regulation">
    <text evidence="1">The matrix-open state (m-state) is inhibited by the membrane-permeable bongkrekic acid (BKA). The cytoplasmic-open state (c-state) is inhibited by the membrane-impermeable toxic inhibitor carboxyatractyloside (CATR).</text>
</comment>
<comment type="subunit">
    <text evidence="1">Monomer.</text>
</comment>
<comment type="subcellular location">
    <subcellularLocation>
        <location evidence="4">Mitochondrion inner membrane</location>
        <topology evidence="5">Multi-pass membrane protein</topology>
    </subcellularLocation>
</comment>
<comment type="domain">
    <text evidence="1">The transmembrane helices are not perpendicular to the plane of the membrane, but cross the membrane at an angle. Odd-numbered transmembrane helices exhibit a sharp kink, due to the presence of a conserved proline residue.</text>
</comment>
<comment type="similarity">
    <text evidence="7">Belongs to the mitochondrial carrier (TC 2.A.29) family.</text>
</comment>
<keyword id="KW-0050">Antiport</keyword>
<keyword id="KW-0472">Membrane</keyword>
<keyword id="KW-0496">Mitochondrion</keyword>
<keyword id="KW-0999">Mitochondrion inner membrane</keyword>
<keyword id="KW-1185">Reference proteome</keyword>
<keyword id="KW-0677">Repeat</keyword>
<keyword id="KW-0812">Transmembrane</keyword>
<keyword id="KW-1133">Transmembrane helix</keyword>
<keyword id="KW-0813">Transport</keyword>
<feature type="chain" id="PRO_0000090593" description="ADP,ATP carrier protein 1">
    <location>
        <begin position="1"/>
        <end position="309"/>
    </location>
</feature>
<feature type="transmembrane region" description="Helical; Name=1" evidence="4">
    <location>
        <begin position="13"/>
        <end position="40"/>
    </location>
</feature>
<feature type="transmembrane region" description="Helical; Name=2" evidence="4">
    <location>
        <begin position="81"/>
        <end position="105"/>
    </location>
</feature>
<feature type="transmembrane region" description="Helical; Name=3" evidence="4">
    <location>
        <begin position="114"/>
        <end position="134"/>
    </location>
</feature>
<feature type="transmembrane region" description="Helical; Name=4" evidence="4">
    <location>
        <begin position="184"/>
        <end position="205"/>
    </location>
</feature>
<feature type="transmembrane region" description="Helical; Name=5" evidence="4">
    <location>
        <begin position="219"/>
        <end position="239"/>
    </location>
</feature>
<feature type="transmembrane region" description="Helical; Name=6" evidence="4">
    <location>
        <begin position="279"/>
        <end position="299"/>
    </location>
</feature>
<feature type="repeat" description="Solcar 1">
    <location>
        <begin position="11"/>
        <end position="104"/>
    </location>
</feature>
<feature type="repeat" description="Solcar 2">
    <location>
        <begin position="116"/>
        <end position="208"/>
    </location>
</feature>
<feature type="repeat" description="Solcar 3">
    <location>
        <begin position="216"/>
        <end position="302"/>
    </location>
</feature>
<feature type="region of interest" description="Important for transport activity" evidence="3">
    <location>
        <begin position="243"/>
        <end position="248"/>
    </location>
</feature>
<feature type="short sequence motif" description="Nucleotide carrier signature motif" evidence="2">
    <location>
        <begin position="243"/>
        <end position="248"/>
    </location>
</feature>
<feature type="binding site" evidence="2">
    <location>
        <position position="86"/>
    </location>
    <ligand>
        <name>ADP</name>
        <dbReference type="ChEBI" id="CHEBI:456216"/>
    </ligand>
</feature>
<feature type="binding site" evidence="2">
    <location>
        <position position="98"/>
    </location>
    <ligand>
        <name>ADP</name>
        <dbReference type="ChEBI" id="CHEBI:456216"/>
    </ligand>
</feature>
<feature type="binding site" evidence="2">
    <location>
        <position position="243"/>
    </location>
    <ligand>
        <name>ADP</name>
        <dbReference type="ChEBI" id="CHEBI:456216"/>
    </ligand>
</feature>
<dbReference type="EMBL" id="M12514">
    <property type="protein sequence ID" value="AAA97486.1"/>
    <property type="molecule type" value="Genomic_DNA"/>
</dbReference>
<dbReference type="EMBL" id="Z49703">
    <property type="protein sequence ID" value="CAA89766.1"/>
    <property type="molecule type" value="Genomic_DNA"/>
</dbReference>
<dbReference type="EMBL" id="M64706">
    <property type="protein sequence ID" value="AAA16884.1"/>
    <property type="molecule type" value="Genomic_DNA"/>
</dbReference>
<dbReference type="EMBL" id="BK006946">
    <property type="protein sequence ID" value="DAA09955.1"/>
    <property type="molecule type" value="Genomic_DNA"/>
</dbReference>
<dbReference type="PIR" id="A24849">
    <property type="entry name" value="A24849"/>
</dbReference>
<dbReference type="RefSeq" id="NP_013772.1">
    <property type="nucleotide sequence ID" value="NM_001182554.1"/>
</dbReference>
<dbReference type="SMR" id="P04710"/>
<dbReference type="BioGRID" id="35232">
    <property type="interactions" value="53"/>
</dbReference>
<dbReference type="DIP" id="DIP-2551N"/>
<dbReference type="FunCoup" id="P04710">
    <property type="interactions" value="838"/>
</dbReference>
<dbReference type="IntAct" id="P04710">
    <property type="interactions" value="5"/>
</dbReference>
<dbReference type="MINT" id="P04710"/>
<dbReference type="STRING" id="4932.YMR056C"/>
<dbReference type="TCDB" id="2.A.29.1.3">
    <property type="family name" value="the mitochondrial carrier (mc) family"/>
</dbReference>
<dbReference type="PaxDb" id="4932-YMR056C"/>
<dbReference type="PeptideAtlas" id="P04710"/>
<dbReference type="DNASU" id="855078"/>
<dbReference type="EnsemblFungi" id="YMR056C_mRNA">
    <property type="protein sequence ID" value="YMR056C"/>
    <property type="gene ID" value="YMR056C"/>
</dbReference>
<dbReference type="GeneID" id="855078"/>
<dbReference type="KEGG" id="sce:YMR056C"/>
<dbReference type="AGR" id="SGD:S000004660"/>
<dbReference type="SGD" id="S000004660">
    <property type="gene designation" value="AAC1"/>
</dbReference>
<dbReference type="VEuPathDB" id="FungiDB:YMR056C"/>
<dbReference type="eggNOG" id="KOG0749">
    <property type="taxonomic scope" value="Eukaryota"/>
</dbReference>
<dbReference type="GeneTree" id="ENSGT00940000176325"/>
<dbReference type="HOGENOM" id="CLU_015166_12_0_1"/>
<dbReference type="InParanoid" id="P04710"/>
<dbReference type="OMA" id="FYPFDAV"/>
<dbReference type="OrthoDB" id="270584at2759"/>
<dbReference type="BioCyc" id="YEAST:G3O-32761-MONOMER"/>
<dbReference type="Reactome" id="R-SCE-1268020">
    <property type="pathway name" value="Mitochondrial protein import"/>
</dbReference>
<dbReference type="Reactome" id="R-SCE-83936">
    <property type="pathway name" value="Transport of nucleosides and free purine and pyrimidine bases across the plasma membrane"/>
</dbReference>
<dbReference type="Reactome" id="R-SCE-9837999">
    <property type="pathway name" value="Mitochondrial protein degradation"/>
</dbReference>
<dbReference type="BioGRID-ORCS" id="855078">
    <property type="hits" value="3 hits in 10 CRISPR screens"/>
</dbReference>
<dbReference type="PRO" id="PR:P04710"/>
<dbReference type="Proteomes" id="UP000002311">
    <property type="component" value="Chromosome XIII"/>
</dbReference>
<dbReference type="RNAct" id="P04710">
    <property type="molecule type" value="protein"/>
</dbReference>
<dbReference type="GO" id="GO:0005829">
    <property type="term" value="C:cytosol"/>
    <property type="evidence" value="ECO:0000304"/>
    <property type="project" value="Reactome"/>
</dbReference>
<dbReference type="GO" id="GO:0005743">
    <property type="term" value="C:mitochondrial inner membrane"/>
    <property type="evidence" value="ECO:0000314"/>
    <property type="project" value="SGD"/>
</dbReference>
<dbReference type="GO" id="GO:0005758">
    <property type="term" value="C:mitochondrial intermembrane space"/>
    <property type="evidence" value="ECO:0000304"/>
    <property type="project" value="Reactome"/>
</dbReference>
<dbReference type="GO" id="GO:0005739">
    <property type="term" value="C:mitochondrion"/>
    <property type="evidence" value="ECO:0007005"/>
    <property type="project" value="SGD"/>
</dbReference>
<dbReference type="GO" id="GO:0005471">
    <property type="term" value="F:ATP:ADP antiporter activity"/>
    <property type="evidence" value="ECO:0000314"/>
    <property type="project" value="SGD"/>
</dbReference>
<dbReference type="GO" id="GO:0009060">
    <property type="term" value="P:aerobic respiration"/>
    <property type="evidence" value="ECO:0000316"/>
    <property type="project" value="SGD"/>
</dbReference>
<dbReference type="GO" id="GO:0006783">
    <property type="term" value="P:heme biosynthetic process"/>
    <property type="evidence" value="ECO:0000316"/>
    <property type="project" value="SGD"/>
</dbReference>
<dbReference type="GO" id="GO:0015886">
    <property type="term" value="P:heme transport"/>
    <property type="evidence" value="ECO:0000315"/>
    <property type="project" value="SGD"/>
</dbReference>
<dbReference type="GO" id="GO:0140021">
    <property type="term" value="P:mitochondrial ADP transmembrane transport"/>
    <property type="evidence" value="ECO:0007669"/>
    <property type="project" value="InterPro"/>
</dbReference>
<dbReference type="GO" id="GO:1990544">
    <property type="term" value="P:mitochondrial ATP transmembrane transport"/>
    <property type="evidence" value="ECO:0007669"/>
    <property type="project" value="InterPro"/>
</dbReference>
<dbReference type="GO" id="GO:0006839">
    <property type="term" value="P:mitochondrial transport"/>
    <property type="evidence" value="ECO:0000316"/>
    <property type="project" value="SGD"/>
</dbReference>
<dbReference type="FunFam" id="1.50.40.10:FF:000157">
    <property type="entry name" value="ADP/ATP carrier"/>
    <property type="match status" value="1"/>
</dbReference>
<dbReference type="Gene3D" id="1.50.40.10">
    <property type="entry name" value="Mitochondrial carrier domain"/>
    <property type="match status" value="1"/>
</dbReference>
<dbReference type="InterPro" id="IPR002113">
    <property type="entry name" value="ADT_euk_type"/>
</dbReference>
<dbReference type="InterPro" id="IPR002067">
    <property type="entry name" value="Mit_carrier"/>
</dbReference>
<dbReference type="InterPro" id="IPR018108">
    <property type="entry name" value="Mitochondrial_sb/sol_carrier"/>
</dbReference>
<dbReference type="InterPro" id="IPR023395">
    <property type="entry name" value="Mt_carrier_dom_sf"/>
</dbReference>
<dbReference type="PANTHER" id="PTHR45635">
    <property type="entry name" value="ADP,ATP CARRIER PROTEIN 1-RELATED-RELATED"/>
    <property type="match status" value="1"/>
</dbReference>
<dbReference type="PANTHER" id="PTHR45635:SF14">
    <property type="entry name" value="ADP_ATP TRANSLOCASE"/>
    <property type="match status" value="1"/>
</dbReference>
<dbReference type="Pfam" id="PF00153">
    <property type="entry name" value="Mito_carr"/>
    <property type="match status" value="3"/>
</dbReference>
<dbReference type="PRINTS" id="PR00927">
    <property type="entry name" value="ADPTRNSLCASE"/>
</dbReference>
<dbReference type="PRINTS" id="PR00926">
    <property type="entry name" value="MITOCARRIER"/>
</dbReference>
<dbReference type="SUPFAM" id="SSF103506">
    <property type="entry name" value="Mitochondrial carrier"/>
    <property type="match status" value="1"/>
</dbReference>
<dbReference type="PROSITE" id="PS50920">
    <property type="entry name" value="SOLCAR"/>
    <property type="match status" value="3"/>
</dbReference>